<accession>Q9Z6W9</accession>
<accession>Q9JQ59</accession>
<gene>
    <name evidence="1" type="primary">rpsN</name>
    <name type="synonym">rs14</name>
    <name type="ordered locus">CPn_0937</name>
    <name type="ordered locus">CP_0924</name>
    <name type="ordered locus">CpB0971</name>
</gene>
<proteinExistence type="inferred from homology"/>
<feature type="chain" id="PRO_0000130885" description="Small ribosomal subunit protein uS14">
    <location>
        <begin position="1"/>
        <end position="101"/>
    </location>
</feature>
<protein>
    <recommendedName>
        <fullName evidence="1">Small ribosomal subunit protein uS14</fullName>
    </recommendedName>
    <alternativeName>
        <fullName evidence="2">30S ribosomal protein S14</fullName>
    </alternativeName>
</protein>
<dbReference type="EMBL" id="AE001363">
    <property type="protein sequence ID" value="AAD19075.1"/>
    <property type="molecule type" value="Genomic_DNA"/>
</dbReference>
<dbReference type="EMBL" id="AE002161">
    <property type="protein sequence ID" value="AAF38709.1"/>
    <property type="molecule type" value="Genomic_DNA"/>
</dbReference>
<dbReference type="EMBL" id="BA000008">
    <property type="protein sequence ID" value="BAA99145.1"/>
    <property type="molecule type" value="Genomic_DNA"/>
</dbReference>
<dbReference type="EMBL" id="AE009440">
    <property type="protein sequence ID" value="AAP98900.1"/>
    <property type="molecule type" value="Genomic_DNA"/>
</dbReference>
<dbReference type="PIR" id="C72017">
    <property type="entry name" value="C72017"/>
</dbReference>
<dbReference type="PIR" id="G86607">
    <property type="entry name" value="G86607"/>
</dbReference>
<dbReference type="RefSeq" id="NP_225132.1">
    <property type="nucleotide sequence ID" value="NC_000922.1"/>
</dbReference>
<dbReference type="RefSeq" id="WP_010883572.1">
    <property type="nucleotide sequence ID" value="NZ_LN847257.1"/>
</dbReference>
<dbReference type="SMR" id="Q9Z6W9"/>
<dbReference type="STRING" id="406984.CPK_ORF00350"/>
<dbReference type="GeneID" id="45050993"/>
<dbReference type="KEGG" id="cpa:CP_0924"/>
<dbReference type="KEGG" id="cpj:rs14"/>
<dbReference type="KEGG" id="cpn:CPn_0937"/>
<dbReference type="KEGG" id="cpt:CpB0971"/>
<dbReference type="PATRIC" id="fig|115713.3.peg.1025"/>
<dbReference type="eggNOG" id="COG0199">
    <property type="taxonomic scope" value="Bacteria"/>
</dbReference>
<dbReference type="HOGENOM" id="CLU_139869_0_1_0"/>
<dbReference type="OMA" id="FGLCRNQ"/>
<dbReference type="OrthoDB" id="9810484at2"/>
<dbReference type="Proteomes" id="UP000000583">
    <property type="component" value="Chromosome"/>
</dbReference>
<dbReference type="Proteomes" id="UP000000801">
    <property type="component" value="Chromosome"/>
</dbReference>
<dbReference type="GO" id="GO:0005737">
    <property type="term" value="C:cytoplasm"/>
    <property type="evidence" value="ECO:0007669"/>
    <property type="project" value="UniProtKB-ARBA"/>
</dbReference>
<dbReference type="GO" id="GO:0015935">
    <property type="term" value="C:small ribosomal subunit"/>
    <property type="evidence" value="ECO:0007669"/>
    <property type="project" value="TreeGrafter"/>
</dbReference>
<dbReference type="GO" id="GO:0019843">
    <property type="term" value="F:rRNA binding"/>
    <property type="evidence" value="ECO:0007669"/>
    <property type="project" value="UniProtKB-UniRule"/>
</dbReference>
<dbReference type="GO" id="GO:0003735">
    <property type="term" value="F:structural constituent of ribosome"/>
    <property type="evidence" value="ECO:0007669"/>
    <property type="project" value="InterPro"/>
</dbReference>
<dbReference type="GO" id="GO:0006412">
    <property type="term" value="P:translation"/>
    <property type="evidence" value="ECO:0007669"/>
    <property type="project" value="UniProtKB-UniRule"/>
</dbReference>
<dbReference type="FunFam" id="1.10.287.1480:FF:000001">
    <property type="entry name" value="30S ribosomal protein S14"/>
    <property type="match status" value="1"/>
</dbReference>
<dbReference type="Gene3D" id="1.10.287.1480">
    <property type="match status" value="1"/>
</dbReference>
<dbReference type="HAMAP" id="MF_00537">
    <property type="entry name" value="Ribosomal_uS14_1"/>
    <property type="match status" value="1"/>
</dbReference>
<dbReference type="InterPro" id="IPR001209">
    <property type="entry name" value="Ribosomal_uS14"/>
</dbReference>
<dbReference type="InterPro" id="IPR023036">
    <property type="entry name" value="Ribosomal_uS14_bac/plastid"/>
</dbReference>
<dbReference type="InterPro" id="IPR018271">
    <property type="entry name" value="Ribosomal_uS14_CS"/>
</dbReference>
<dbReference type="NCBIfam" id="NF006477">
    <property type="entry name" value="PRK08881.1"/>
    <property type="match status" value="1"/>
</dbReference>
<dbReference type="PANTHER" id="PTHR19836">
    <property type="entry name" value="30S RIBOSOMAL PROTEIN S14"/>
    <property type="match status" value="1"/>
</dbReference>
<dbReference type="PANTHER" id="PTHR19836:SF19">
    <property type="entry name" value="SMALL RIBOSOMAL SUBUNIT PROTEIN US14M"/>
    <property type="match status" value="1"/>
</dbReference>
<dbReference type="Pfam" id="PF00253">
    <property type="entry name" value="Ribosomal_S14"/>
    <property type="match status" value="1"/>
</dbReference>
<dbReference type="SUPFAM" id="SSF57716">
    <property type="entry name" value="Glucocorticoid receptor-like (DNA-binding domain)"/>
    <property type="match status" value="1"/>
</dbReference>
<dbReference type="PROSITE" id="PS00527">
    <property type="entry name" value="RIBOSOMAL_S14"/>
    <property type="match status" value="1"/>
</dbReference>
<sequence>MAKKSSVAREAKRRRLVEANFKKRSDLRKIVKSLSVSEEEKENARISLNKMKRDTSPTRLHNRCLLTGRPRGYLRKFAISRICFRQMASMGEIPGVIKASW</sequence>
<comment type="function">
    <text evidence="1">Binds 16S rRNA, required for the assembly of 30S particles and may also be responsible for determining the conformation of the 16S rRNA at the A site.</text>
</comment>
<comment type="subunit">
    <text evidence="1">Part of the 30S ribosomal subunit. Contacts proteins S3 and S10.</text>
</comment>
<comment type="similarity">
    <text evidence="1">Belongs to the universal ribosomal protein uS14 family.</text>
</comment>
<organism>
    <name type="scientific">Chlamydia pneumoniae</name>
    <name type="common">Chlamydophila pneumoniae</name>
    <dbReference type="NCBI Taxonomy" id="83558"/>
    <lineage>
        <taxon>Bacteria</taxon>
        <taxon>Pseudomonadati</taxon>
        <taxon>Chlamydiota</taxon>
        <taxon>Chlamydiia</taxon>
        <taxon>Chlamydiales</taxon>
        <taxon>Chlamydiaceae</taxon>
        <taxon>Chlamydia/Chlamydophila group</taxon>
        <taxon>Chlamydia</taxon>
    </lineage>
</organism>
<reference key="1">
    <citation type="journal article" date="1999" name="Nat. Genet.">
        <title>Comparative genomes of Chlamydia pneumoniae and C. trachomatis.</title>
        <authorList>
            <person name="Kalman S."/>
            <person name="Mitchell W.P."/>
            <person name="Marathe R."/>
            <person name="Lammel C.J."/>
            <person name="Fan J."/>
            <person name="Hyman R.W."/>
            <person name="Olinger L."/>
            <person name="Grimwood J."/>
            <person name="Davis R.W."/>
            <person name="Stephens R.S."/>
        </authorList>
    </citation>
    <scope>NUCLEOTIDE SEQUENCE [LARGE SCALE GENOMIC DNA]</scope>
    <source>
        <strain>CWL029</strain>
    </source>
</reference>
<reference key="2">
    <citation type="journal article" date="2000" name="Nucleic Acids Res.">
        <title>Genome sequences of Chlamydia trachomatis MoPn and Chlamydia pneumoniae AR39.</title>
        <authorList>
            <person name="Read T.D."/>
            <person name="Brunham R.C."/>
            <person name="Shen C."/>
            <person name="Gill S.R."/>
            <person name="Heidelberg J.F."/>
            <person name="White O."/>
            <person name="Hickey E.K."/>
            <person name="Peterson J.D."/>
            <person name="Utterback T.R."/>
            <person name="Berry K.J."/>
            <person name="Bass S."/>
            <person name="Linher K.D."/>
            <person name="Weidman J.F."/>
            <person name="Khouri H.M."/>
            <person name="Craven B."/>
            <person name="Bowman C."/>
            <person name="Dodson R.J."/>
            <person name="Gwinn M.L."/>
            <person name="Nelson W.C."/>
            <person name="DeBoy R.T."/>
            <person name="Kolonay J.F."/>
            <person name="McClarty G."/>
            <person name="Salzberg S.L."/>
            <person name="Eisen J.A."/>
            <person name="Fraser C.M."/>
        </authorList>
    </citation>
    <scope>NUCLEOTIDE SEQUENCE [LARGE SCALE GENOMIC DNA]</scope>
    <source>
        <strain>AR39</strain>
    </source>
</reference>
<reference key="3">
    <citation type="journal article" date="2000" name="Nucleic Acids Res.">
        <title>Comparison of whole genome sequences of Chlamydia pneumoniae J138 from Japan and CWL029 from USA.</title>
        <authorList>
            <person name="Shirai M."/>
            <person name="Hirakawa H."/>
            <person name="Kimoto M."/>
            <person name="Tabuchi M."/>
            <person name="Kishi F."/>
            <person name="Ouchi K."/>
            <person name="Shiba T."/>
            <person name="Ishii K."/>
            <person name="Hattori M."/>
            <person name="Kuhara S."/>
            <person name="Nakazawa T."/>
        </authorList>
    </citation>
    <scope>NUCLEOTIDE SEQUENCE [LARGE SCALE GENOMIC DNA]</scope>
    <source>
        <strain>J138</strain>
    </source>
</reference>
<reference key="4">
    <citation type="submission" date="2002-05" db="EMBL/GenBank/DDBJ databases">
        <title>The genome sequence of Chlamydia pneumoniae TW183 and comparison with other Chlamydia strains based on whole genome sequence analysis.</title>
        <authorList>
            <person name="Geng M.M."/>
            <person name="Schuhmacher A."/>
            <person name="Muehldorfer I."/>
            <person name="Bensch K.W."/>
            <person name="Schaefer K.P."/>
            <person name="Schneider S."/>
            <person name="Pohl T."/>
            <person name="Essig A."/>
            <person name="Marre R."/>
            <person name="Melchers K."/>
        </authorList>
    </citation>
    <scope>NUCLEOTIDE SEQUENCE [LARGE SCALE GENOMIC DNA]</scope>
    <source>
        <strain>TW-183</strain>
    </source>
</reference>
<name>RS14_CHLPN</name>
<keyword id="KW-0687">Ribonucleoprotein</keyword>
<keyword id="KW-0689">Ribosomal protein</keyword>
<keyword id="KW-0694">RNA-binding</keyword>
<keyword id="KW-0699">rRNA-binding</keyword>
<evidence type="ECO:0000255" key="1">
    <source>
        <dbReference type="HAMAP-Rule" id="MF_00537"/>
    </source>
</evidence>
<evidence type="ECO:0000305" key="2"/>